<evidence type="ECO:0000250" key="1"/>
<evidence type="ECO:0000269" key="2">
    <source>
    </source>
</evidence>
<evidence type="ECO:0000269" key="3">
    <source>
    </source>
</evidence>
<evidence type="ECO:0000305" key="4"/>
<evidence type="ECO:0007829" key="5">
    <source>
        <dbReference type="PDB" id="3JBX"/>
    </source>
</evidence>
<evidence type="ECO:0007829" key="6">
    <source>
        <dbReference type="PDB" id="6DBJ"/>
    </source>
</evidence>
<comment type="function">
    <text evidence="1">Core component of the RAG complex, a multiprotein complex that mediates the DNA cleavage phase during V(D)J recombination. V(D)J recombination assembles a diverse repertoire of immunoglobulin and T-cell receptor genes in developing B and T lymphocytes through rearrangement of different V (variable), in some cases D (diversity), and J (joining) gene segments. DNA cleavage by the RAG complex occurs in 2 steps: a first nick is introduced in the top strand immediately upstream of the heptamer, generating a 3'-hydroxyl group that can attack the phosphodiester bond on the opposite strand in a direct transesterification reaction, thereby creating 4 DNA ends: 2 hairpin coding ends and 2 blunt, 5'-phosphorylated ends. In the RAG complex, rag2 is not the catalytic component but is required for all known catalytic activities mediated by RAG1. It probably acts as a sensor of chromatin state that recruits the RAG complex to H3K4me3 (By similarity).</text>
</comment>
<comment type="subunit">
    <text evidence="1">Component of the RAG complex composed of core components rag1 and rag2.</text>
</comment>
<comment type="subcellular location">
    <subcellularLocation>
        <location evidence="1">Nucleus</location>
    </subcellularLocation>
</comment>
<comment type="developmental stage">
    <text evidence="2 3">First detected in the thymus during day 4 of development. Expression then increases in the thymus for at least three weeks.</text>
</comment>
<comment type="domain">
    <text evidence="1">The atypical PHD-type zinc finger recognizes and binds histone H3 trimethylated on 'Lys-4' (H3K4me3). The atypical PHD-type zinc finger also binds various phosphoinositides (By similarity).</text>
</comment>
<comment type="similarity">
    <text evidence="4">Belongs to the RAG2 family.</text>
</comment>
<feature type="chain" id="PRO_0000167141" description="V(D)J recombination-activating protein 2">
    <location>
        <begin position="1"/>
        <end position="530"/>
    </location>
</feature>
<feature type="zinc finger region" description="PHD-type; atypical">
    <location>
        <begin position="416"/>
        <end position="485"/>
    </location>
</feature>
<feature type="binding site" evidence="1">
    <location>
        <position position="419"/>
    </location>
    <ligand>
        <name>Zn(2+)</name>
        <dbReference type="ChEBI" id="CHEBI:29105"/>
        <label>1</label>
    </ligand>
</feature>
<feature type="binding site" evidence="1">
    <location>
        <position position="423"/>
    </location>
    <ligand>
        <name>Zn(2+)</name>
        <dbReference type="ChEBI" id="CHEBI:29105"/>
        <label>1</label>
    </ligand>
</feature>
<feature type="binding site" evidence="1">
    <location>
        <position position="446"/>
    </location>
    <ligand>
        <name>Zn(2+)</name>
        <dbReference type="ChEBI" id="CHEBI:29105"/>
        <label>2</label>
    </ligand>
</feature>
<feature type="binding site" evidence="1">
    <location>
        <position position="453"/>
    </location>
    <ligand>
        <name>Zn(2+)</name>
        <dbReference type="ChEBI" id="CHEBI:29105"/>
        <label>2</label>
    </ligand>
</feature>
<feature type="binding site" evidence="1">
    <location>
        <position position="456"/>
    </location>
    <ligand>
        <name>Zn(2+)</name>
        <dbReference type="ChEBI" id="CHEBI:29105"/>
        <label>1</label>
    </ligand>
</feature>
<feature type="binding site" evidence="1">
    <location>
        <position position="459"/>
    </location>
    <ligand>
        <name>Zn(2+)</name>
        <dbReference type="ChEBI" id="CHEBI:29105"/>
        <label>1</label>
    </ligand>
</feature>
<feature type="binding site" evidence="1">
    <location>
        <position position="479"/>
    </location>
    <ligand>
        <name>Zn(2+)</name>
        <dbReference type="ChEBI" id="CHEBI:29105"/>
        <label>2</label>
    </ligand>
</feature>
<feature type="binding site" evidence="1">
    <location>
        <position position="482"/>
    </location>
    <ligand>
        <name>Zn(2+)</name>
        <dbReference type="ChEBI" id="CHEBI:29105"/>
        <label>2</label>
    </ligand>
</feature>
<feature type="strand" evidence="6">
    <location>
        <begin position="1"/>
        <end position="10"/>
    </location>
</feature>
<feature type="strand" evidence="6">
    <location>
        <begin position="20"/>
        <end position="24"/>
    </location>
</feature>
<feature type="strand" evidence="6">
    <location>
        <begin position="27"/>
        <end position="31"/>
    </location>
</feature>
<feature type="strand" evidence="6">
    <location>
        <begin position="34"/>
        <end position="36"/>
    </location>
</feature>
<feature type="strand" evidence="5">
    <location>
        <begin position="41"/>
        <end position="43"/>
    </location>
</feature>
<feature type="strand" evidence="6">
    <location>
        <begin position="45"/>
        <end position="51"/>
    </location>
</feature>
<feature type="strand" evidence="6">
    <location>
        <begin position="54"/>
        <end position="59"/>
    </location>
</feature>
<feature type="strand" evidence="6">
    <location>
        <begin position="76"/>
        <end position="78"/>
    </location>
</feature>
<feature type="strand" evidence="6">
    <location>
        <begin position="84"/>
        <end position="86"/>
    </location>
</feature>
<feature type="strand" evidence="6">
    <location>
        <begin position="91"/>
        <end position="93"/>
    </location>
</feature>
<feature type="strand" evidence="6">
    <location>
        <begin position="98"/>
        <end position="100"/>
    </location>
</feature>
<feature type="strand" evidence="6">
    <location>
        <begin position="106"/>
        <end position="114"/>
    </location>
</feature>
<feature type="strand" evidence="6">
    <location>
        <begin position="116"/>
        <end position="118"/>
    </location>
</feature>
<feature type="strand" evidence="6">
    <location>
        <begin position="120"/>
        <end position="127"/>
    </location>
</feature>
<feature type="strand" evidence="6">
    <location>
        <begin position="130"/>
        <end position="132"/>
    </location>
</feature>
<feature type="strand" evidence="6">
    <location>
        <begin position="141"/>
        <end position="147"/>
    </location>
</feature>
<feature type="strand" evidence="6">
    <location>
        <begin position="150"/>
        <end position="156"/>
    </location>
</feature>
<feature type="strand" evidence="6">
    <location>
        <begin position="159"/>
        <end position="161"/>
    </location>
</feature>
<feature type="turn" evidence="6">
    <location>
        <begin position="164"/>
        <end position="166"/>
    </location>
</feature>
<feature type="strand" evidence="5">
    <location>
        <begin position="169"/>
        <end position="173"/>
    </location>
</feature>
<feature type="strand" evidence="6">
    <location>
        <begin position="175"/>
        <end position="177"/>
    </location>
</feature>
<feature type="strand" evidence="6">
    <location>
        <begin position="182"/>
        <end position="185"/>
    </location>
</feature>
<feature type="strand" evidence="6">
    <location>
        <begin position="187"/>
        <end position="189"/>
    </location>
</feature>
<feature type="strand" evidence="6">
    <location>
        <begin position="191"/>
        <end position="195"/>
    </location>
</feature>
<feature type="strand" evidence="6">
    <location>
        <begin position="209"/>
        <end position="212"/>
    </location>
</feature>
<feature type="strand" evidence="6">
    <location>
        <begin position="215"/>
        <end position="218"/>
    </location>
</feature>
<feature type="turn" evidence="6">
    <location>
        <begin position="224"/>
        <end position="227"/>
    </location>
</feature>
<feature type="strand" evidence="6">
    <location>
        <begin position="233"/>
        <end position="238"/>
    </location>
</feature>
<feature type="strand" evidence="6">
    <location>
        <begin position="242"/>
        <end position="244"/>
    </location>
</feature>
<feature type="strand" evidence="6">
    <location>
        <begin position="247"/>
        <end position="253"/>
    </location>
</feature>
<feature type="strand" evidence="6">
    <location>
        <begin position="263"/>
        <end position="265"/>
    </location>
</feature>
<feature type="strand" evidence="6">
    <location>
        <begin position="267"/>
        <end position="273"/>
    </location>
</feature>
<feature type="strand" evidence="6">
    <location>
        <begin position="277"/>
        <end position="279"/>
    </location>
</feature>
<feature type="strand" evidence="6">
    <location>
        <begin position="287"/>
        <end position="292"/>
    </location>
</feature>
<feature type="strand" evidence="6">
    <location>
        <begin position="300"/>
        <end position="302"/>
    </location>
</feature>
<feature type="helix" evidence="6">
    <location>
        <begin position="309"/>
        <end position="313"/>
    </location>
</feature>
<feature type="strand" evidence="6">
    <location>
        <begin position="318"/>
        <end position="323"/>
    </location>
</feature>
<feature type="strand" evidence="6">
    <location>
        <begin position="326"/>
        <end position="332"/>
    </location>
</feature>
<feature type="strand" evidence="6">
    <location>
        <begin position="343"/>
        <end position="350"/>
    </location>
</feature>
<sequence>MSLQPLTAVNCGSLVQPGFSLLDLEGDVYLFGQKGWPKRSCPTGIFGVRIKKGELKLRAISFSNNSSYLPPLRCPAIAHFEAQDGKPECYLIHGGRTPNNELSSSLYMLSVDSRGCNRKVTLRCEEKELVGDVPSARYGHTLSVINSRGKTACVLFGGRSYMPPTERTTQNWNSVGDCPPQVYLIDLEFGCCTAHTLPELTDGQSFHVALARQDCVYFLGGHILSSDCRPSRLIRLHVELLLGSPVLTCTILHEGLTITSAIASPIGYHEYIIFGGYQSETQKRMECTYVGLDDVGVHMESREPPQWTSEISHSRTWFGGSLGKGTALVAIPSEGNPTPPEAYHFYQVSFQKEQDGEATAQGCSQESTDFEDSAPLEDSEELYFGREPHELEYSSDVEGDTYNEEDEEDESQTGYWIKCCLSCQVDPNIWEPYYSTELTRPAMIFCSRGEGGHWVHAQCMELPESLLLQLSQDNSKYFCLDHGGLPKQEMTPPKQMLPVKRVPMKMTHRKAPVSLKMTPAKKTFLRRLFD</sequence>
<dbReference type="EMBL" id="U71094">
    <property type="protein sequence ID" value="AAC60366.1"/>
    <property type="molecule type" value="Genomic_DNA"/>
</dbReference>
<dbReference type="PDB" id="3JBW">
    <property type="method" value="EM"/>
    <property type="resolution" value="4.63 A"/>
    <property type="chains" value="B/D=1-530"/>
</dbReference>
<dbReference type="PDB" id="3JBX">
    <property type="method" value="EM"/>
    <property type="resolution" value="3.40 A"/>
    <property type="chains" value="B/D=1-530"/>
</dbReference>
<dbReference type="PDB" id="3JBY">
    <property type="method" value="EM"/>
    <property type="resolution" value="3.70 A"/>
    <property type="chains" value="B/D=1-530"/>
</dbReference>
<dbReference type="PDB" id="6DBI">
    <property type="method" value="EM"/>
    <property type="resolution" value="3.36 A"/>
    <property type="chains" value="B/D=1-530"/>
</dbReference>
<dbReference type="PDB" id="6DBJ">
    <property type="method" value="EM"/>
    <property type="resolution" value="2.99 A"/>
    <property type="chains" value="B/D=1-530"/>
</dbReference>
<dbReference type="PDB" id="6DBL">
    <property type="method" value="EM"/>
    <property type="resolution" value="5.00 A"/>
    <property type="chains" value="B/D=1-530"/>
</dbReference>
<dbReference type="PDB" id="6DBO">
    <property type="method" value="EM"/>
    <property type="resolution" value="4.45 A"/>
    <property type="chains" value="B/D=1-530"/>
</dbReference>
<dbReference type="PDB" id="6DBQ">
    <property type="method" value="EM"/>
    <property type="resolution" value="4.22 A"/>
    <property type="chains" value="B/D=1-530"/>
</dbReference>
<dbReference type="PDB" id="6DBR">
    <property type="method" value="EM"/>
    <property type="resolution" value="4.00 A"/>
    <property type="chains" value="B/D=1-530"/>
</dbReference>
<dbReference type="PDB" id="6DBT">
    <property type="method" value="EM"/>
    <property type="resolution" value="4.30 A"/>
    <property type="chains" value="B/D=1-530"/>
</dbReference>
<dbReference type="PDB" id="6DBU">
    <property type="method" value="EM"/>
    <property type="resolution" value="3.90 A"/>
    <property type="chains" value="B/D=1-530"/>
</dbReference>
<dbReference type="PDB" id="6DBV">
    <property type="method" value="EM"/>
    <property type="resolution" value="4.29 A"/>
    <property type="chains" value="B/D=1-530"/>
</dbReference>
<dbReference type="PDB" id="6DBW">
    <property type="method" value="EM"/>
    <property type="resolution" value="4.70 A"/>
    <property type="chains" value="B/D=1-530"/>
</dbReference>
<dbReference type="PDB" id="6DBX">
    <property type="method" value="EM"/>
    <property type="resolution" value="4.20 A"/>
    <property type="chains" value="B/D=1-530"/>
</dbReference>
<dbReference type="PDBsum" id="3JBW"/>
<dbReference type="PDBsum" id="3JBX"/>
<dbReference type="PDBsum" id="3JBY"/>
<dbReference type="PDBsum" id="6DBI"/>
<dbReference type="PDBsum" id="6DBJ"/>
<dbReference type="PDBsum" id="6DBL"/>
<dbReference type="PDBsum" id="6DBO"/>
<dbReference type="PDBsum" id="6DBQ"/>
<dbReference type="PDBsum" id="6DBR"/>
<dbReference type="PDBsum" id="6DBT"/>
<dbReference type="PDBsum" id="6DBU"/>
<dbReference type="PDBsum" id="6DBV"/>
<dbReference type="PDBsum" id="6DBW"/>
<dbReference type="PDBsum" id="6DBX"/>
<dbReference type="SMR" id="O13034"/>
<dbReference type="FunCoup" id="O13034">
    <property type="interactions" value="1780"/>
</dbReference>
<dbReference type="STRING" id="7955.ENSDARP00000068402"/>
<dbReference type="PaxDb" id="7955-ENSDARP00000068402"/>
<dbReference type="AGR" id="ZFIN:ZDB-GENE-990415-235"/>
<dbReference type="ZFIN" id="ZDB-GENE-990415-235">
    <property type="gene designation" value="rag2"/>
</dbReference>
<dbReference type="eggNOG" id="ENOG502QVKU">
    <property type="taxonomic scope" value="Eukaryota"/>
</dbReference>
<dbReference type="InParanoid" id="O13034"/>
<dbReference type="EvolutionaryTrace" id="O13034"/>
<dbReference type="PRO" id="PR:O13034"/>
<dbReference type="Proteomes" id="UP000000437">
    <property type="component" value="Unplaced"/>
</dbReference>
<dbReference type="GO" id="GO:0097519">
    <property type="term" value="C:DNA recombinase complex"/>
    <property type="evidence" value="ECO:0000353"/>
    <property type="project" value="ZFIN"/>
</dbReference>
<dbReference type="GO" id="GO:1905347">
    <property type="term" value="C:endodeoxyribonuclease complex"/>
    <property type="evidence" value="ECO:0000353"/>
    <property type="project" value="ZFIN"/>
</dbReference>
<dbReference type="GO" id="GO:0005634">
    <property type="term" value="C:nucleus"/>
    <property type="evidence" value="ECO:0007669"/>
    <property type="project" value="UniProtKB-SubCell"/>
</dbReference>
<dbReference type="GO" id="GO:0003682">
    <property type="term" value="F:chromatin binding"/>
    <property type="evidence" value="ECO:0000250"/>
    <property type="project" value="UniProtKB"/>
</dbReference>
<dbReference type="GO" id="GO:0140002">
    <property type="term" value="F:histone H3K4me3 reader activity"/>
    <property type="evidence" value="ECO:0000250"/>
    <property type="project" value="UniProtKB"/>
</dbReference>
<dbReference type="GO" id="GO:0035091">
    <property type="term" value="F:phosphatidylinositol binding"/>
    <property type="evidence" value="ECO:0000250"/>
    <property type="project" value="UniProtKB"/>
</dbReference>
<dbReference type="GO" id="GO:0005547">
    <property type="term" value="F:phosphatidylinositol-3,4,5-trisphosphate binding"/>
    <property type="evidence" value="ECO:0000250"/>
    <property type="project" value="UniProtKB"/>
</dbReference>
<dbReference type="GO" id="GO:0043325">
    <property type="term" value="F:phosphatidylinositol-3,4-bisphosphate binding"/>
    <property type="evidence" value="ECO:0000250"/>
    <property type="project" value="UniProtKB"/>
</dbReference>
<dbReference type="GO" id="GO:0080025">
    <property type="term" value="F:phosphatidylinositol-3,5-bisphosphate binding"/>
    <property type="evidence" value="ECO:0000250"/>
    <property type="project" value="UniProtKB"/>
</dbReference>
<dbReference type="GO" id="GO:0005546">
    <property type="term" value="F:phosphatidylinositol-4,5-bisphosphate binding"/>
    <property type="evidence" value="ECO:0000250"/>
    <property type="project" value="UniProtKB"/>
</dbReference>
<dbReference type="GO" id="GO:0043565">
    <property type="term" value="F:sequence-specific DNA binding"/>
    <property type="evidence" value="ECO:0000353"/>
    <property type="project" value="ZFIN"/>
</dbReference>
<dbReference type="GO" id="GO:0008270">
    <property type="term" value="F:zinc ion binding"/>
    <property type="evidence" value="ECO:0000250"/>
    <property type="project" value="UniProtKB"/>
</dbReference>
<dbReference type="GO" id="GO:0030183">
    <property type="term" value="P:B cell differentiation"/>
    <property type="evidence" value="ECO:0000250"/>
    <property type="project" value="UniProtKB"/>
</dbReference>
<dbReference type="GO" id="GO:0048534">
    <property type="term" value="P:hematopoietic or lymphoid organ development"/>
    <property type="evidence" value="ECO:0000315"/>
    <property type="project" value="ZFIN"/>
</dbReference>
<dbReference type="GO" id="GO:0033152">
    <property type="term" value="P:immunoglobulin V(D)J recombination"/>
    <property type="evidence" value="ECO:0000314"/>
    <property type="project" value="ZFIN"/>
</dbReference>
<dbReference type="GO" id="GO:0030098">
    <property type="term" value="P:lymphocyte differentiation"/>
    <property type="evidence" value="ECO:0000315"/>
    <property type="project" value="ZFIN"/>
</dbReference>
<dbReference type="GO" id="GO:0065004">
    <property type="term" value="P:protein-DNA complex assembly"/>
    <property type="evidence" value="ECO:0000353"/>
    <property type="project" value="ZFIN"/>
</dbReference>
<dbReference type="GO" id="GO:0030217">
    <property type="term" value="P:T cell differentiation"/>
    <property type="evidence" value="ECO:0000315"/>
    <property type="project" value="ZFIN"/>
</dbReference>
<dbReference type="GO" id="GO:0033077">
    <property type="term" value="P:T cell differentiation in thymus"/>
    <property type="evidence" value="ECO:0000250"/>
    <property type="project" value="UniProtKB"/>
</dbReference>
<dbReference type="GO" id="GO:0048538">
    <property type="term" value="P:thymus development"/>
    <property type="evidence" value="ECO:0000315"/>
    <property type="project" value="ZFIN"/>
</dbReference>
<dbReference type="GO" id="GO:0033151">
    <property type="term" value="P:V(D)J recombination"/>
    <property type="evidence" value="ECO:0000353"/>
    <property type="project" value="ZFIN"/>
</dbReference>
<dbReference type="CDD" id="cd15569">
    <property type="entry name" value="PHD_RAG2"/>
    <property type="match status" value="1"/>
</dbReference>
<dbReference type="FunFam" id="2.120.10.80:FF:000047">
    <property type="entry name" value="V(D)J recombination-activating protein 2"/>
    <property type="match status" value="1"/>
</dbReference>
<dbReference type="Gene3D" id="2.120.10.80">
    <property type="entry name" value="Kelch-type beta propeller"/>
    <property type="match status" value="1"/>
</dbReference>
<dbReference type="Gene3D" id="3.30.160.290">
    <property type="entry name" value="Rag2 PHD finger"/>
    <property type="match status" value="1"/>
</dbReference>
<dbReference type="InterPro" id="IPR011043">
    <property type="entry name" value="Gal_Oxase/kelch_b-propeller"/>
</dbReference>
<dbReference type="InterPro" id="IPR015915">
    <property type="entry name" value="Kelch-typ_b-propeller"/>
</dbReference>
<dbReference type="InterPro" id="IPR004321">
    <property type="entry name" value="RAG2"/>
</dbReference>
<dbReference type="InterPro" id="IPR025162">
    <property type="entry name" value="RAG2_PHD"/>
</dbReference>
<dbReference type="InterPro" id="IPR011011">
    <property type="entry name" value="Znf_FYVE_PHD"/>
</dbReference>
<dbReference type="PANTHER" id="PTHR10960">
    <property type="entry name" value="V D J RECOMBINATION-ACTIVATING PROTEIN 2"/>
    <property type="match status" value="1"/>
</dbReference>
<dbReference type="PANTHER" id="PTHR10960:SF0">
    <property type="entry name" value="V(D)J RECOMBINATION-ACTIVATING PROTEIN 2"/>
    <property type="match status" value="1"/>
</dbReference>
<dbReference type="Pfam" id="PF03089">
    <property type="entry name" value="RAG2"/>
    <property type="match status" value="1"/>
</dbReference>
<dbReference type="Pfam" id="PF13341">
    <property type="entry name" value="RAG2_PHD"/>
    <property type="match status" value="1"/>
</dbReference>
<dbReference type="SUPFAM" id="SSF57903">
    <property type="entry name" value="FYVE/PHD zinc finger"/>
    <property type="match status" value="1"/>
</dbReference>
<dbReference type="SUPFAM" id="SSF50965">
    <property type="entry name" value="Galactose oxidase, central domain"/>
    <property type="match status" value="1"/>
</dbReference>
<gene>
    <name type="primary">rag2</name>
    <name type="synonym">rag-2</name>
</gene>
<accession>O13034</accession>
<organism>
    <name type="scientific">Danio rerio</name>
    <name type="common">Zebrafish</name>
    <name type="synonym">Brachydanio rerio</name>
    <dbReference type="NCBI Taxonomy" id="7955"/>
    <lineage>
        <taxon>Eukaryota</taxon>
        <taxon>Metazoa</taxon>
        <taxon>Chordata</taxon>
        <taxon>Craniata</taxon>
        <taxon>Vertebrata</taxon>
        <taxon>Euteleostomi</taxon>
        <taxon>Actinopterygii</taxon>
        <taxon>Neopterygii</taxon>
        <taxon>Teleostei</taxon>
        <taxon>Ostariophysi</taxon>
        <taxon>Cypriniformes</taxon>
        <taxon>Danionidae</taxon>
        <taxon>Danioninae</taxon>
        <taxon>Danio</taxon>
    </lineage>
</organism>
<keyword id="KW-0002">3D-structure</keyword>
<keyword id="KW-0156">Chromatin regulator</keyword>
<keyword id="KW-0233">DNA recombination</keyword>
<keyword id="KW-0479">Metal-binding</keyword>
<keyword id="KW-0539">Nucleus</keyword>
<keyword id="KW-1185">Reference proteome</keyword>
<keyword id="KW-0862">Zinc</keyword>
<keyword id="KW-0863">Zinc-finger</keyword>
<proteinExistence type="evidence at protein level"/>
<protein>
    <recommendedName>
        <fullName>V(D)J recombination-activating protein 2</fullName>
        <shortName>RAG-2</shortName>
    </recommendedName>
</protein>
<name>RAG2_DANRE</name>
<reference key="1">
    <citation type="journal article" date="1997" name="Immunogenetics">
        <title>Characterization and expression of the recombination activating genes (rag1 and rag2) of zebrafish.</title>
        <authorList>
            <person name="Willett C.E."/>
            <person name="Cherry J.J."/>
            <person name="Steiner L.A."/>
        </authorList>
    </citation>
    <scope>NUCLEOTIDE SEQUENCE [GENOMIC DNA]</scope>
    <scope>DEVELOPMENTAL STAGE</scope>
    <source>
        <tissue>Larva</tissue>
    </source>
</reference>
<reference key="2">
    <citation type="journal article" date="1997" name="Dev. Biol.">
        <title>Expression of zebrafish rag genes during early development identifies the thymus.</title>
        <authorList>
            <person name="Willett C.E."/>
            <person name="Zapata A.G."/>
            <person name="Hopkins N."/>
            <person name="Steiner L.A."/>
        </authorList>
    </citation>
    <scope>DEVELOPMENTAL STAGE</scope>
</reference>